<reference key="1">
    <citation type="journal article" date="2006" name="Proc. Natl. Acad. Sci. U.S.A.">
        <title>Molecular genetic anatomy of inter- and intraserotype variation in the human bacterial pathogen group A Streptococcus.</title>
        <authorList>
            <person name="Beres S.B."/>
            <person name="Richter E.W."/>
            <person name="Nagiec M.J."/>
            <person name="Sumby P."/>
            <person name="Porcella S.F."/>
            <person name="DeLeo F.R."/>
            <person name="Musser J.M."/>
        </authorList>
    </citation>
    <scope>NUCLEOTIDE SEQUENCE [LARGE SCALE GENOMIC DNA]</scope>
    <source>
        <strain>MGAS10270</strain>
    </source>
</reference>
<evidence type="ECO:0000255" key="1">
    <source>
        <dbReference type="HAMAP-Rule" id="MF_00394"/>
    </source>
</evidence>
<dbReference type="EC" id="1.1.1.94" evidence="1"/>
<dbReference type="EMBL" id="CP000260">
    <property type="protein sequence ID" value="ABF33258.1"/>
    <property type="molecule type" value="Genomic_DNA"/>
</dbReference>
<dbReference type="SMR" id="Q1JIR5"/>
<dbReference type="KEGG" id="sph:MGAS10270_Spy0193"/>
<dbReference type="HOGENOM" id="CLU_033449_0_2_9"/>
<dbReference type="UniPathway" id="UPA00940"/>
<dbReference type="Proteomes" id="UP000002436">
    <property type="component" value="Chromosome"/>
</dbReference>
<dbReference type="GO" id="GO:0005829">
    <property type="term" value="C:cytosol"/>
    <property type="evidence" value="ECO:0007669"/>
    <property type="project" value="TreeGrafter"/>
</dbReference>
<dbReference type="GO" id="GO:0047952">
    <property type="term" value="F:glycerol-3-phosphate dehydrogenase [NAD(P)+] activity"/>
    <property type="evidence" value="ECO:0007669"/>
    <property type="project" value="UniProtKB-UniRule"/>
</dbReference>
<dbReference type="GO" id="GO:0051287">
    <property type="term" value="F:NAD binding"/>
    <property type="evidence" value="ECO:0007669"/>
    <property type="project" value="InterPro"/>
</dbReference>
<dbReference type="GO" id="GO:0005975">
    <property type="term" value="P:carbohydrate metabolic process"/>
    <property type="evidence" value="ECO:0007669"/>
    <property type="project" value="InterPro"/>
</dbReference>
<dbReference type="GO" id="GO:0046167">
    <property type="term" value="P:glycerol-3-phosphate biosynthetic process"/>
    <property type="evidence" value="ECO:0007669"/>
    <property type="project" value="UniProtKB-UniRule"/>
</dbReference>
<dbReference type="GO" id="GO:0046168">
    <property type="term" value="P:glycerol-3-phosphate catabolic process"/>
    <property type="evidence" value="ECO:0007669"/>
    <property type="project" value="InterPro"/>
</dbReference>
<dbReference type="GO" id="GO:0006650">
    <property type="term" value="P:glycerophospholipid metabolic process"/>
    <property type="evidence" value="ECO:0007669"/>
    <property type="project" value="UniProtKB-UniRule"/>
</dbReference>
<dbReference type="GO" id="GO:0008654">
    <property type="term" value="P:phospholipid biosynthetic process"/>
    <property type="evidence" value="ECO:0007669"/>
    <property type="project" value="UniProtKB-KW"/>
</dbReference>
<dbReference type="FunFam" id="1.10.1040.10:FF:000001">
    <property type="entry name" value="Glycerol-3-phosphate dehydrogenase [NAD(P)+]"/>
    <property type="match status" value="1"/>
</dbReference>
<dbReference type="FunFam" id="3.40.50.720:FF:000019">
    <property type="entry name" value="Glycerol-3-phosphate dehydrogenase [NAD(P)+]"/>
    <property type="match status" value="1"/>
</dbReference>
<dbReference type="Gene3D" id="1.10.1040.10">
    <property type="entry name" value="N-(1-d-carboxylethyl)-l-norvaline Dehydrogenase, domain 2"/>
    <property type="match status" value="1"/>
</dbReference>
<dbReference type="Gene3D" id="3.40.50.720">
    <property type="entry name" value="NAD(P)-binding Rossmann-like Domain"/>
    <property type="match status" value="1"/>
</dbReference>
<dbReference type="HAMAP" id="MF_00394">
    <property type="entry name" value="NAD_Glyc3P_dehydrog"/>
    <property type="match status" value="1"/>
</dbReference>
<dbReference type="InterPro" id="IPR008927">
    <property type="entry name" value="6-PGluconate_DH-like_C_sf"/>
</dbReference>
<dbReference type="InterPro" id="IPR013328">
    <property type="entry name" value="6PGD_dom2"/>
</dbReference>
<dbReference type="InterPro" id="IPR006168">
    <property type="entry name" value="G3P_DH_NAD-dep"/>
</dbReference>
<dbReference type="InterPro" id="IPR006109">
    <property type="entry name" value="G3P_DH_NAD-dep_C"/>
</dbReference>
<dbReference type="InterPro" id="IPR011128">
    <property type="entry name" value="G3P_DH_NAD-dep_N"/>
</dbReference>
<dbReference type="InterPro" id="IPR036291">
    <property type="entry name" value="NAD(P)-bd_dom_sf"/>
</dbReference>
<dbReference type="NCBIfam" id="NF000940">
    <property type="entry name" value="PRK00094.1-2"/>
    <property type="match status" value="1"/>
</dbReference>
<dbReference type="NCBIfam" id="NF000941">
    <property type="entry name" value="PRK00094.1-3"/>
    <property type="match status" value="1"/>
</dbReference>
<dbReference type="NCBIfam" id="NF000942">
    <property type="entry name" value="PRK00094.1-4"/>
    <property type="match status" value="1"/>
</dbReference>
<dbReference type="PANTHER" id="PTHR11728">
    <property type="entry name" value="GLYCEROL-3-PHOSPHATE DEHYDROGENASE"/>
    <property type="match status" value="1"/>
</dbReference>
<dbReference type="PANTHER" id="PTHR11728:SF1">
    <property type="entry name" value="GLYCEROL-3-PHOSPHATE DEHYDROGENASE [NAD(+)] 2, CHLOROPLASTIC"/>
    <property type="match status" value="1"/>
</dbReference>
<dbReference type="Pfam" id="PF07479">
    <property type="entry name" value="NAD_Gly3P_dh_C"/>
    <property type="match status" value="1"/>
</dbReference>
<dbReference type="Pfam" id="PF01210">
    <property type="entry name" value="NAD_Gly3P_dh_N"/>
    <property type="match status" value="1"/>
</dbReference>
<dbReference type="PIRSF" id="PIRSF000114">
    <property type="entry name" value="Glycerol-3-P_dh"/>
    <property type="match status" value="1"/>
</dbReference>
<dbReference type="PRINTS" id="PR00077">
    <property type="entry name" value="GPDHDRGNASE"/>
</dbReference>
<dbReference type="SUPFAM" id="SSF48179">
    <property type="entry name" value="6-phosphogluconate dehydrogenase C-terminal domain-like"/>
    <property type="match status" value="1"/>
</dbReference>
<dbReference type="SUPFAM" id="SSF51735">
    <property type="entry name" value="NAD(P)-binding Rossmann-fold domains"/>
    <property type="match status" value="1"/>
</dbReference>
<dbReference type="PROSITE" id="PS00957">
    <property type="entry name" value="NAD_G3PDH"/>
    <property type="match status" value="1"/>
</dbReference>
<proteinExistence type="inferred from homology"/>
<accession>Q1JIR5</accession>
<protein>
    <recommendedName>
        <fullName evidence="1">Glycerol-3-phosphate dehydrogenase [NAD(P)+]</fullName>
        <ecNumber evidence="1">1.1.1.94</ecNumber>
    </recommendedName>
    <alternativeName>
        <fullName evidence="1">NAD(P)(+)-dependent glycerol-3-phosphate dehydrogenase</fullName>
    </alternativeName>
    <alternativeName>
        <fullName evidence="1">NAD(P)H-dependent dihydroxyacetone-phosphate reductase</fullName>
    </alternativeName>
</protein>
<keyword id="KW-0963">Cytoplasm</keyword>
<keyword id="KW-0444">Lipid biosynthesis</keyword>
<keyword id="KW-0443">Lipid metabolism</keyword>
<keyword id="KW-0520">NAD</keyword>
<keyword id="KW-0521">NADP</keyword>
<keyword id="KW-0547">Nucleotide-binding</keyword>
<keyword id="KW-0560">Oxidoreductase</keyword>
<keyword id="KW-0594">Phospholipid biosynthesis</keyword>
<keyword id="KW-1208">Phospholipid metabolism</keyword>
<gene>
    <name evidence="1" type="primary">gpsA</name>
    <name type="ordered locus">MGAS10270_Spy0193</name>
</gene>
<comment type="function">
    <text evidence="1">Catalyzes the reduction of the glycolytic intermediate dihydroxyacetone phosphate (DHAP) to sn-glycerol 3-phosphate (G3P), the key precursor for phospholipid synthesis.</text>
</comment>
<comment type="catalytic activity">
    <reaction evidence="1">
        <text>sn-glycerol 3-phosphate + NAD(+) = dihydroxyacetone phosphate + NADH + H(+)</text>
        <dbReference type="Rhea" id="RHEA:11092"/>
        <dbReference type="ChEBI" id="CHEBI:15378"/>
        <dbReference type="ChEBI" id="CHEBI:57540"/>
        <dbReference type="ChEBI" id="CHEBI:57597"/>
        <dbReference type="ChEBI" id="CHEBI:57642"/>
        <dbReference type="ChEBI" id="CHEBI:57945"/>
        <dbReference type="EC" id="1.1.1.94"/>
    </reaction>
    <physiologicalReaction direction="right-to-left" evidence="1">
        <dbReference type="Rhea" id="RHEA:11094"/>
    </physiologicalReaction>
</comment>
<comment type="catalytic activity">
    <reaction evidence="1">
        <text>sn-glycerol 3-phosphate + NADP(+) = dihydroxyacetone phosphate + NADPH + H(+)</text>
        <dbReference type="Rhea" id="RHEA:11096"/>
        <dbReference type="ChEBI" id="CHEBI:15378"/>
        <dbReference type="ChEBI" id="CHEBI:57597"/>
        <dbReference type="ChEBI" id="CHEBI:57642"/>
        <dbReference type="ChEBI" id="CHEBI:57783"/>
        <dbReference type="ChEBI" id="CHEBI:58349"/>
        <dbReference type="EC" id="1.1.1.94"/>
    </reaction>
    <physiologicalReaction direction="right-to-left" evidence="1">
        <dbReference type="Rhea" id="RHEA:11098"/>
    </physiologicalReaction>
</comment>
<comment type="pathway">
    <text evidence="1">Membrane lipid metabolism; glycerophospholipid metabolism.</text>
</comment>
<comment type="subcellular location">
    <subcellularLocation>
        <location evidence="1">Cytoplasm</location>
    </subcellularLocation>
</comment>
<comment type="similarity">
    <text evidence="1">Belongs to the NAD-dependent glycerol-3-phosphate dehydrogenase family.</text>
</comment>
<feature type="chain" id="PRO_0000255382" description="Glycerol-3-phosphate dehydrogenase [NAD(P)+]">
    <location>
        <begin position="1"/>
        <end position="338"/>
    </location>
</feature>
<feature type="active site" description="Proton acceptor" evidence="1">
    <location>
        <position position="194"/>
    </location>
</feature>
<feature type="binding site" evidence="1">
    <location>
        <position position="13"/>
    </location>
    <ligand>
        <name>NADPH</name>
        <dbReference type="ChEBI" id="CHEBI:57783"/>
    </ligand>
</feature>
<feature type="binding site" evidence="1">
    <location>
        <position position="14"/>
    </location>
    <ligand>
        <name>NADPH</name>
        <dbReference type="ChEBI" id="CHEBI:57783"/>
    </ligand>
</feature>
<feature type="binding site" evidence="1">
    <location>
        <position position="108"/>
    </location>
    <ligand>
        <name>NADPH</name>
        <dbReference type="ChEBI" id="CHEBI:57783"/>
    </ligand>
</feature>
<feature type="binding site" evidence="1">
    <location>
        <position position="108"/>
    </location>
    <ligand>
        <name>sn-glycerol 3-phosphate</name>
        <dbReference type="ChEBI" id="CHEBI:57597"/>
    </ligand>
</feature>
<feature type="binding site" evidence="1">
    <location>
        <position position="139"/>
    </location>
    <ligand>
        <name>sn-glycerol 3-phosphate</name>
        <dbReference type="ChEBI" id="CHEBI:57597"/>
    </ligand>
</feature>
<feature type="binding site" evidence="1">
    <location>
        <position position="141"/>
    </location>
    <ligand>
        <name>sn-glycerol 3-phosphate</name>
        <dbReference type="ChEBI" id="CHEBI:57597"/>
    </ligand>
</feature>
<feature type="binding site" evidence="1">
    <location>
        <position position="143"/>
    </location>
    <ligand>
        <name>NADPH</name>
        <dbReference type="ChEBI" id="CHEBI:57783"/>
    </ligand>
</feature>
<feature type="binding site" evidence="1">
    <location>
        <position position="194"/>
    </location>
    <ligand>
        <name>sn-glycerol 3-phosphate</name>
        <dbReference type="ChEBI" id="CHEBI:57597"/>
    </ligand>
</feature>
<feature type="binding site" evidence="1">
    <location>
        <position position="247"/>
    </location>
    <ligand>
        <name>sn-glycerol 3-phosphate</name>
        <dbReference type="ChEBI" id="CHEBI:57597"/>
    </ligand>
</feature>
<feature type="binding site" evidence="1">
    <location>
        <position position="257"/>
    </location>
    <ligand>
        <name>sn-glycerol 3-phosphate</name>
        <dbReference type="ChEBI" id="CHEBI:57597"/>
    </ligand>
</feature>
<feature type="binding site" evidence="1">
    <location>
        <position position="258"/>
    </location>
    <ligand>
        <name>NADPH</name>
        <dbReference type="ChEBI" id="CHEBI:57783"/>
    </ligand>
</feature>
<feature type="binding site" evidence="1">
    <location>
        <position position="258"/>
    </location>
    <ligand>
        <name>sn-glycerol 3-phosphate</name>
        <dbReference type="ChEBI" id="CHEBI:57597"/>
    </ligand>
</feature>
<feature type="binding site" evidence="1">
    <location>
        <position position="259"/>
    </location>
    <ligand>
        <name>sn-glycerol 3-phosphate</name>
        <dbReference type="ChEBI" id="CHEBI:57597"/>
    </ligand>
</feature>
<feature type="binding site" evidence="1">
    <location>
        <position position="282"/>
    </location>
    <ligand>
        <name>NADPH</name>
        <dbReference type="ChEBI" id="CHEBI:57783"/>
    </ligand>
</feature>
<feature type="binding site" evidence="1">
    <location>
        <position position="284"/>
    </location>
    <ligand>
        <name>NADPH</name>
        <dbReference type="ChEBI" id="CHEBI:57783"/>
    </ligand>
</feature>
<name>GPDA_STRPD</name>
<sequence>MTKQKVAILGPGSWGTALSQVLNDNGHDVRLWGNISDQIEEINTKHTNRHYFKDIVLDKNITATLDLGQALSDVDAVLFVVPTKVTRLVARQVAAILDHKVVVMHASKGLEPETHERLSTILEEEIPAHFRSEVVVVSGPSHAEETIVRDITLITAASKDIEAAKYVQSLFSNHYFRLYTNTDVIGVETAGALKNIIAVGAGALHGLGYGDNAKAAVITRGLAEITRLGVKLGADPLTYSGLSGVGDLIVTGTSVHSRNWRAGAALGRGEKLEDIERNMGMVIEGIATTKVAYEIAQDLGVYMPITTAIYKSIYEGADIKESILGMMSNEFRSENEWH</sequence>
<organism>
    <name type="scientific">Streptococcus pyogenes serotype M2 (strain MGAS10270)</name>
    <dbReference type="NCBI Taxonomy" id="370552"/>
    <lineage>
        <taxon>Bacteria</taxon>
        <taxon>Bacillati</taxon>
        <taxon>Bacillota</taxon>
        <taxon>Bacilli</taxon>
        <taxon>Lactobacillales</taxon>
        <taxon>Streptococcaceae</taxon>
        <taxon>Streptococcus</taxon>
    </lineage>
</organism>